<organism>
    <name type="scientific">Jannaschia sp. (strain CCS1)</name>
    <dbReference type="NCBI Taxonomy" id="290400"/>
    <lineage>
        <taxon>Bacteria</taxon>
        <taxon>Pseudomonadati</taxon>
        <taxon>Pseudomonadota</taxon>
        <taxon>Alphaproteobacteria</taxon>
        <taxon>Rhodobacterales</taxon>
        <taxon>Roseobacteraceae</taxon>
        <taxon>Jannaschia</taxon>
    </lineage>
</organism>
<accession>Q28K97</accession>
<evidence type="ECO:0000255" key="1">
    <source>
        <dbReference type="HAMAP-Rule" id="MF_01714"/>
    </source>
</evidence>
<reference key="1">
    <citation type="submission" date="2006-02" db="EMBL/GenBank/DDBJ databases">
        <title>Complete sequence of chromosome of Jannaschia sp. CCS1.</title>
        <authorList>
            <consortium name="US DOE Joint Genome Institute"/>
            <person name="Copeland A."/>
            <person name="Lucas S."/>
            <person name="Lapidus A."/>
            <person name="Barry K."/>
            <person name="Detter J.C."/>
            <person name="Glavina del Rio T."/>
            <person name="Hammon N."/>
            <person name="Israni S."/>
            <person name="Pitluck S."/>
            <person name="Brettin T."/>
            <person name="Bruce D."/>
            <person name="Han C."/>
            <person name="Tapia R."/>
            <person name="Gilna P."/>
            <person name="Chertkov O."/>
            <person name="Saunders E."/>
            <person name="Schmutz J."/>
            <person name="Larimer F."/>
            <person name="Land M."/>
            <person name="Kyrpides N."/>
            <person name="Lykidis A."/>
            <person name="Moran M.A."/>
            <person name="Belas R."/>
            <person name="Ye W."/>
            <person name="Buchan A."/>
            <person name="Gonzalez J.M."/>
            <person name="Schell M.A."/>
            <person name="Richardson P."/>
        </authorList>
    </citation>
    <scope>NUCLEOTIDE SEQUENCE [LARGE SCALE GENOMIC DNA]</scope>
    <source>
        <strain>CCS1</strain>
    </source>
</reference>
<name>TAUB_JANSC</name>
<keyword id="KW-0067">ATP-binding</keyword>
<keyword id="KW-0997">Cell inner membrane</keyword>
<keyword id="KW-1003">Cell membrane</keyword>
<keyword id="KW-0472">Membrane</keyword>
<keyword id="KW-0547">Nucleotide-binding</keyword>
<keyword id="KW-1185">Reference proteome</keyword>
<keyword id="KW-1278">Translocase</keyword>
<keyword id="KW-0813">Transport</keyword>
<gene>
    <name evidence="1" type="primary">tauB</name>
    <name type="ordered locus">Jann_3948</name>
</gene>
<protein>
    <recommendedName>
        <fullName evidence="1">Taurine import ATP-binding protein TauB</fullName>
        <ecNumber evidence="1">7.6.2.7</ecNumber>
    </recommendedName>
</protein>
<sequence>MTGLAIRNISMRFDLPNGGSVQALQDVSLDIKQGEIMSVLGPSGCGKTTLLNIVAGFLAPTDGVIELNGHEVHGPNAERGMVFQKGALFEWMSVRENVSFGPRMKGERASDYSANVDHLLDVVGLQDFKEKAIYELSGGMQQRVALARCLANDPDVILMDEPLGALDALTREKMQSLVLKLWKETGKTIILITHSVEEALLLGERLIVMAPRPGRIHKEYRLPFADEGVDADLREVKKNPKFAEVREEILGMIWDMEEEIMGRTEASA</sequence>
<dbReference type="EC" id="7.6.2.7" evidence="1"/>
<dbReference type="EMBL" id="CP000264">
    <property type="protein sequence ID" value="ABD56865.1"/>
    <property type="molecule type" value="Genomic_DNA"/>
</dbReference>
<dbReference type="RefSeq" id="WP_011457062.1">
    <property type="nucleotide sequence ID" value="NC_007802.1"/>
</dbReference>
<dbReference type="SMR" id="Q28K97"/>
<dbReference type="STRING" id="290400.Jann_3948"/>
<dbReference type="KEGG" id="jan:Jann_3948"/>
<dbReference type="eggNOG" id="COG1116">
    <property type="taxonomic scope" value="Bacteria"/>
</dbReference>
<dbReference type="HOGENOM" id="CLU_000604_1_22_5"/>
<dbReference type="OrthoDB" id="9802264at2"/>
<dbReference type="Proteomes" id="UP000008326">
    <property type="component" value="Chromosome"/>
</dbReference>
<dbReference type="GO" id="GO:0005886">
    <property type="term" value="C:plasma membrane"/>
    <property type="evidence" value="ECO:0007669"/>
    <property type="project" value="UniProtKB-SubCell"/>
</dbReference>
<dbReference type="GO" id="GO:0015411">
    <property type="term" value="F:ABC-type taurine transporter transporter activity"/>
    <property type="evidence" value="ECO:0007669"/>
    <property type="project" value="UniProtKB-EC"/>
</dbReference>
<dbReference type="GO" id="GO:0005524">
    <property type="term" value="F:ATP binding"/>
    <property type="evidence" value="ECO:0007669"/>
    <property type="project" value="UniProtKB-KW"/>
</dbReference>
<dbReference type="GO" id="GO:0016887">
    <property type="term" value="F:ATP hydrolysis activity"/>
    <property type="evidence" value="ECO:0007669"/>
    <property type="project" value="InterPro"/>
</dbReference>
<dbReference type="CDD" id="cd03293">
    <property type="entry name" value="ABC_NrtD_SsuB_transporters"/>
    <property type="match status" value="1"/>
</dbReference>
<dbReference type="Gene3D" id="3.40.50.300">
    <property type="entry name" value="P-loop containing nucleotide triphosphate hydrolases"/>
    <property type="match status" value="1"/>
</dbReference>
<dbReference type="InterPro" id="IPR003593">
    <property type="entry name" value="AAA+_ATPase"/>
</dbReference>
<dbReference type="InterPro" id="IPR003439">
    <property type="entry name" value="ABC_transporter-like_ATP-bd"/>
</dbReference>
<dbReference type="InterPro" id="IPR017871">
    <property type="entry name" value="ABC_transporter-like_CS"/>
</dbReference>
<dbReference type="InterPro" id="IPR050166">
    <property type="entry name" value="ABC_transporter_ATP-bind"/>
</dbReference>
<dbReference type="InterPro" id="IPR027417">
    <property type="entry name" value="P-loop_NTPase"/>
</dbReference>
<dbReference type="PANTHER" id="PTHR42788:SF18">
    <property type="entry name" value="TAURINE IMPORT ATP-BINDING PROTEIN TAUB"/>
    <property type="match status" value="1"/>
</dbReference>
<dbReference type="PANTHER" id="PTHR42788">
    <property type="entry name" value="TAURINE IMPORT ATP-BINDING PROTEIN-RELATED"/>
    <property type="match status" value="1"/>
</dbReference>
<dbReference type="Pfam" id="PF00005">
    <property type="entry name" value="ABC_tran"/>
    <property type="match status" value="1"/>
</dbReference>
<dbReference type="SMART" id="SM00382">
    <property type="entry name" value="AAA"/>
    <property type="match status" value="1"/>
</dbReference>
<dbReference type="SUPFAM" id="SSF52540">
    <property type="entry name" value="P-loop containing nucleoside triphosphate hydrolases"/>
    <property type="match status" value="1"/>
</dbReference>
<dbReference type="PROSITE" id="PS00211">
    <property type="entry name" value="ABC_TRANSPORTER_1"/>
    <property type="match status" value="1"/>
</dbReference>
<dbReference type="PROSITE" id="PS50893">
    <property type="entry name" value="ABC_TRANSPORTER_2"/>
    <property type="match status" value="1"/>
</dbReference>
<dbReference type="PROSITE" id="PS51250">
    <property type="entry name" value="TAUB"/>
    <property type="match status" value="1"/>
</dbReference>
<feature type="chain" id="PRO_0000275831" description="Taurine import ATP-binding protein TauB">
    <location>
        <begin position="1"/>
        <end position="268"/>
    </location>
</feature>
<feature type="domain" description="ABC transporter" evidence="1">
    <location>
        <begin position="4"/>
        <end position="236"/>
    </location>
</feature>
<feature type="binding site" evidence="1">
    <location>
        <begin position="41"/>
        <end position="48"/>
    </location>
    <ligand>
        <name>ATP</name>
        <dbReference type="ChEBI" id="CHEBI:30616"/>
    </ligand>
</feature>
<proteinExistence type="inferred from homology"/>
<comment type="function">
    <text evidence="1">Part of the ABC transporter complex TauABC involved in taurine import. Responsible for energy coupling to the transport system.</text>
</comment>
<comment type="catalytic activity">
    <reaction evidence="1">
        <text>taurine(out) + ATP + H2O = taurine(in) + ADP + phosphate + H(+)</text>
        <dbReference type="Rhea" id="RHEA:14613"/>
        <dbReference type="ChEBI" id="CHEBI:15377"/>
        <dbReference type="ChEBI" id="CHEBI:15378"/>
        <dbReference type="ChEBI" id="CHEBI:30616"/>
        <dbReference type="ChEBI" id="CHEBI:43474"/>
        <dbReference type="ChEBI" id="CHEBI:456216"/>
        <dbReference type="ChEBI" id="CHEBI:507393"/>
        <dbReference type="EC" id="7.6.2.7"/>
    </reaction>
</comment>
<comment type="subunit">
    <text evidence="1">The complex is composed of two ATP-binding proteins (TauB), two transmembrane proteins (TauC) and a solute-binding protein (TauA).</text>
</comment>
<comment type="subcellular location">
    <subcellularLocation>
        <location evidence="1">Cell inner membrane</location>
        <topology evidence="1">Peripheral membrane protein</topology>
    </subcellularLocation>
</comment>
<comment type="similarity">
    <text evidence="1">Belongs to the ABC transporter superfamily. Taurine importer (TC 3.A.1.17.1) family.</text>
</comment>